<keyword id="KW-0364">Heterocyst</keyword>
<keyword id="KW-0535">Nitrogen fixation</keyword>
<reference key="1">
    <citation type="journal article" date="2014" name="Stand. Genomic Sci.">
        <title>Complete genome sequence of Anabaena variabilis ATCC 29413.</title>
        <authorList>
            <person name="Thiel T."/>
            <person name="Pratte B.S."/>
            <person name="Zhong J."/>
            <person name="Goodwin L."/>
            <person name="Copeland A."/>
            <person name="Lucas S."/>
            <person name="Han C."/>
            <person name="Pitluck S."/>
            <person name="Land M.L."/>
            <person name="Kyrpides N.C."/>
            <person name="Woyke T."/>
        </authorList>
    </citation>
    <scope>NUCLEOTIDE SEQUENCE [LARGE SCALE GENOMIC DNA]</scope>
    <source>
        <strain>ATCC 29413 / PCC 7937</strain>
    </source>
</reference>
<reference key="2">
    <citation type="journal article" date="1995" name="Mol. Microbiol.">
        <title>Distinct and differently regulated Mo-dependent nitrogen-fixing systems evolved for heterocysts and vegetative cells of Anabaena variabilis ATCC 29413: characterization of the fdxH1/2 gene regions as part of the nif1/2 gene clusters.</title>
        <authorList>
            <person name="Schrautemeier B."/>
            <person name="Neveling U."/>
            <person name="Schmitz S."/>
        </authorList>
    </citation>
    <scope>NUCLEOTIDE SEQUENCE [GENOMIC DNA] OF 159-267</scope>
</reference>
<organism>
    <name type="scientific">Trichormus variabilis (strain ATCC 29413 / PCC 7937)</name>
    <name type="common">Anabaena variabilis</name>
    <dbReference type="NCBI Taxonomy" id="240292"/>
    <lineage>
        <taxon>Bacteria</taxon>
        <taxon>Bacillati</taxon>
        <taxon>Cyanobacteriota</taxon>
        <taxon>Cyanophyceae</taxon>
        <taxon>Nostocales</taxon>
        <taxon>Nostocaceae</taxon>
        <taxon>Trichormus</taxon>
    </lineage>
</organism>
<sequence>MINLTPTELERYSRQMMLPNFGEAAQKRLKSATVLVTGVGGLGGTAALYLAVAGVGRLILVRGGDLRLDDMNRQVLMTDDWVGKPRVFKAKETLQAINPDIQIETIHDYVTSDNVDSLVQSADMALDCAHNFTERDLLNSACVRWRKPMVEAAMDGMEAYLTTIIPGVTPCLSCIFPEKPEWDRRGFSVLGAVSGTLACLTALEAIKLITGFSQPLLSQLLTIDLNRMEFAKRRLYRDRSCPVCGNDAPWRYAQSNSMETSSNCTHS</sequence>
<dbReference type="EMBL" id="CP000117">
    <property type="protein sequence ID" value="ABA23543.1"/>
    <property type="molecule type" value="Genomic_DNA"/>
</dbReference>
<dbReference type="EMBL" id="Z46887">
    <property type="protein sequence ID" value="CAA86984.1"/>
    <property type="molecule type" value="Genomic_DNA"/>
</dbReference>
<dbReference type="PIR" id="S70242">
    <property type="entry name" value="S70242"/>
</dbReference>
<dbReference type="SMR" id="P46049"/>
<dbReference type="STRING" id="240292.Ava_3938"/>
<dbReference type="KEGG" id="ava:Ava_3938"/>
<dbReference type="eggNOG" id="COG0476">
    <property type="taxonomic scope" value="Bacteria"/>
</dbReference>
<dbReference type="HOGENOM" id="CLU_013325_10_0_3"/>
<dbReference type="Proteomes" id="UP000002533">
    <property type="component" value="Chromosome"/>
</dbReference>
<dbReference type="GO" id="GO:0005737">
    <property type="term" value="C:cytoplasm"/>
    <property type="evidence" value="ECO:0007669"/>
    <property type="project" value="TreeGrafter"/>
</dbReference>
<dbReference type="GO" id="GO:0016779">
    <property type="term" value="F:nucleotidyltransferase activity"/>
    <property type="evidence" value="ECO:0007669"/>
    <property type="project" value="TreeGrafter"/>
</dbReference>
<dbReference type="GO" id="GO:0004792">
    <property type="term" value="F:thiosulfate-cyanide sulfurtransferase activity"/>
    <property type="evidence" value="ECO:0007669"/>
    <property type="project" value="TreeGrafter"/>
</dbReference>
<dbReference type="GO" id="GO:0008641">
    <property type="term" value="F:ubiquitin-like modifier activating enzyme activity"/>
    <property type="evidence" value="ECO:0007669"/>
    <property type="project" value="InterPro"/>
</dbReference>
<dbReference type="GO" id="GO:0043158">
    <property type="term" value="P:heterocyst development"/>
    <property type="evidence" value="ECO:0007669"/>
    <property type="project" value="UniProtKB-KW"/>
</dbReference>
<dbReference type="GO" id="GO:0009399">
    <property type="term" value="P:nitrogen fixation"/>
    <property type="evidence" value="ECO:0007669"/>
    <property type="project" value="UniProtKB-KW"/>
</dbReference>
<dbReference type="CDD" id="cd00757">
    <property type="entry name" value="ThiF_MoeB_HesA_family"/>
    <property type="match status" value="1"/>
</dbReference>
<dbReference type="FunFam" id="3.40.50.720:FF:000080">
    <property type="entry name" value="Thiazole biosynthesis adenylyltransferase ThiF"/>
    <property type="match status" value="1"/>
</dbReference>
<dbReference type="Gene3D" id="3.40.50.720">
    <property type="entry name" value="NAD(P)-binding Rossmann-like Domain"/>
    <property type="match status" value="1"/>
</dbReference>
<dbReference type="InterPro" id="IPR045886">
    <property type="entry name" value="ThiF/MoeB/HesA"/>
</dbReference>
<dbReference type="InterPro" id="IPR000594">
    <property type="entry name" value="ThiF_NAD_FAD-bd"/>
</dbReference>
<dbReference type="InterPro" id="IPR035985">
    <property type="entry name" value="Ubiquitin-activating_enz"/>
</dbReference>
<dbReference type="PANTHER" id="PTHR10953:SF102">
    <property type="entry name" value="ADENYLYLTRANSFERASE AND SULFURTRANSFERASE MOCS3"/>
    <property type="match status" value="1"/>
</dbReference>
<dbReference type="PANTHER" id="PTHR10953">
    <property type="entry name" value="UBIQUITIN-ACTIVATING ENZYME E1"/>
    <property type="match status" value="1"/>
</dbReference>
<dbReference type="Pfam" id="PF00899">
    <property type="entry name" value="ThiF"/>
    <property type="match status" value="1"/>
</dbReference>
<dbReference type="SUPFAM" id="SSF69572">
    <property type="entry name" value="Activating enzymes of the ubiquitin-like proteins"/>
    <property type="match status" value="1"/>
</dbReference>
<protein>
    <recommendedName>
        <fullName>Protein HesA, heterocyst</fullName>
    </recommendedName>
</protein>
<comment type="developmental stage">
    <text>Expressed exclusively within heterocysts.</text>
</comment>
<comment type="similarity">
    <text evidence="1">Belongs to the HesA/MoeB/ThiF family.</text>
</comment>
<gene>
    <name type="primary">hesA1</name>
    <name type="ordered locus">Ava_3938</name>
</gene>
<accession>P46049</accession>
<accession>Q3M643</accession>
<feature type="chain" id="PRO_0000120571" description="Protein HesA, heterocyst">
    <location>
        <begin position="1"/>
        <end position="267"/>
    </location>
</feature>
<name>HESA1_TRIV2</name>
<evidence type="ECO:0000305" key="1"/>
<proteinExistence type="evidence at transcript level"/>